<accession>Q87A87</accession>
<reference key="1">
    <citation type="journal article" date="2003" name="J. Bacteriol.">
        <title>Comparative analyses of the complete genome sequences of Pierce's disease and citrus variegated chlorosis strains of Xylella fastidiosa.</title>
        <authorList>
            <person name="Van Sluys M.A."/>
            <person name="de Oliveira M.C."/>
            <person name="Monteiro-Vitorello C.B."/>
            <person name="Miyaki C.Y."/>
            <person name="Furlan L.R."/>
            <person name="Camargo L.E.A."/>
            <person name="da Silva A.C.R."/>
            <person name="Moon D.H."/>
            <person name="Takita M.A."/>
            <person name="Lemos E.G.M."/>
            <person name="Machado M.A."/>
            <person name="Ferro M.I.T."/>
            <person name="da Silva F.R."/>
            <person name="Goldman M.H.S."/>
            <person name="Goldman G.H."/>
            <person name="Lemos M.V.F."/>
            <person name="El-Dorry H."/>
            <person name="Tsai S.M."/>
            <person name="Carrer H."/>
            <person name="Carraro D.M."/>
            <person name="de Oliveira R.C."/>
            <person name="Nunes L.R."/>
            <person name="Siqueira W.J."/>
            <person name="Coutinho L.L."/>
            <person name="Kimura E.T."/>
            <person name="Ferro E.S."/>
            <person name="Harakava R."/>
            <person name="Kuramae E.E."/>
            <person name="Marino C.L."/>
            <person name="Giglioti E."/>
            <person name="Abreu I.L."/>
            <person name="Alves L.M.C."/>
            <person name="do Amaral A.M."/>
            <person name="Baia G.S."/>
            <person name="Blanco S.R."/>
            <person name="Brito M.S."/>
            <person name="Cannavan F.S."/>
            <person name="Celestino A.V."/>
            <person name="da Cunha A.F."/>
            <person name="Fenille R.C."/>
            <person name="Ferro J.A."/>
            <person name="Formighieri E.F."/>
            <person name="Kishi L.T."/>
            <person name="Leoni S.G."/>
            <person name="Oliveira A.R."/>
            <person name="Rosa V.E. Jr."/>
            <person name="Sassaki F.T."/>
            <person name="Sena J.A.D."/>
            <person name="de Souza A.A."/>
            <person name="Truffi D."/>
            <person name="Tsukumo F."/>
            <person name="Yanai G.M."/>
            <person name="Zaros L.G."/>
            <person name="Civerolo E.L."/>
            <person name="Simpson A.J.G."/>
            <person name="Almeida N.F. Jr."/>
            <person name="Setubal J.C."/>
            <person name="Kitajima J.P."/>
        </authorList>
    </citation>
    <scope>NUCLEOTIDE SEQUENCE [LARGE SCALE GENOMIC DNA]</scope>
    <source>
        <strain>Temecula1 / ATCC 700964</strain>
    </source>
</reference>
<gene>
    <name evidence="1" type="primary">zipA</name>
    <name type="ordered locus">PD_1941</name>
</gene>
<proteinExistence type="inferred from homology"/>
<feature type="chain" id="PRO_0000214545" description="Cell division protein ZipA">
    <location>
        <begin position="1"/>
        <end position="243"/>
    </location>
</feature>
<feature type="topological domain" description="Periplasmic" evidence="1">
    <location>
        <begin position="1"/>
        <end position="4"/>
    </location>
</feature>
<feature type="transmembrane region" description="Helical" evidence="1">
    <location>
        <begin position="5"/>
        <end position="25"/>
    </location>
</feature>
<feature type="topological domain" description="Cytoplasmic" evidence="1">
    <location>
        <begin position="26"/>
        <end position="243"/>
    </location>
</feature>
<feature type="region of interest" description="Disordered" evidence="2">
    <location>
        <begin position="32"/>
        <end position="89"/>
    </location>
</feature>
<feature type="compositionally biased region" description="Basic and acidic residues" evidence="2">
    <location>
        <begin position="38"/>
        <end position="49"/>
    </location>
</feature>
<protein>
    <recommendedName>
        <fullName evidence="1">Cell division protein ZipA</fullName>
    </recommendedName>
</protein>
<keyword id="KW-0131">Cell cycle</keyword>
<keyword id="KW-0132">Cell division</keyword>
<keyword id="KW-0997">Cell inner membrane</keyword>
<keyword id="KW-1003">Cell membrane</keyword>
<keyword id="KW-0472">Membrane</keyword>
<keyword id="KW-1185">Reference proteome</keyword>
<keyword id="KW-0812">Transmembrane</keyword>
<keyword id="KW-1133">Transmembrane helix</keyword>
<evidence type="ECO:0000255" key="1">
    <source>
        <dbReference type="HAMAP-Rule" id="MF_00509"/>
    </source>
</evidence>
<evidence type="ECO:0000256" key="2">
    <source>
        <dbReference type="SAM" id="MobiDB-lite"/>
    </source>
</evidence>
<organism>
    <name type="scientific">Xylella fastidiosa (strain Temecula1 / ATCC 700964)</name>
    <dbReference type="NCBI Taxonomy" id="183190"/>
    <lineage>
        <taxon>Bacteria</taxon>
        <taxon>Pseudomonadati</taxon>
        <taxon>Pseudomonadota</taxon>
        <taxon>Gammaproteobacteria</taxon>
        <taxon>Lysobacterales</taxon>
        <taxon>Lysobacteraceae</taxon>
        <taxon>Xylella</taxon>
    </lineage>
</organism>
<sequence>MSDVTLLRIGIAIVGILFVAAVFFFSTPKTSAHRVRTKKEEPPRERREPMLSTEVDNSPHQSVDEVPASVPQQQVNPEATKPGEIELGKRPTNHFDKIILLFVAAKAEHTLRGEDIVVAAEKTGMIFGYMNVFHRLVEGYPERGPIFSMASILKPGSFDMANIREMQIPAISFFLTLPAPMTALDAWEKMLPTVQRMAELLDGVVLDESRNALGRQRIAHIRDELRAYDRQQQVPPLIKNSRW</sequence>
<dbReference type="EMBL" id="AE009442">
    <property type="protein sequence ID" value="AAO29771.1"/>
    <property type="molecule type" value="Genomic_DNA"/>
</dbReference>
<dbReference type="RefSeq" id="WP_004090349.1">
    <property type="nucleotide sequence ID" value="NC_004556.1"/>
</dbReference>
<dbReference type="SMR" id="Q87A87"/>
<dbReference type="GeneID" id="93905802"/>
<dbReference type="KEGG" id="xft:PD_1941"/>
<dbReference type="HOGENOM" id="CLU_030174_2_1_6"/>
<dbReference type="Proteomes" id="UP000002516">
    <property type="component" value="Chromosome"/>
</dbReference>
<dbReference type="GO" id="GO:0032153">
    <property type="term" value="C:cell division site"/>
    <property type="evidence" value="ECO:0007669"/>
    <property type="project" value="UniProtKB-UniRule"/>
</dbReference>
<dbReference type="GO" id="GO:0005886">
    <property type="term" value="C:plasma membrane"/>
    <property type="evidence" value="ECO:0007669"/>
    <property type="project" value="UniProtKB-SubCell"/>
</dbReference>
<dbReference type="GO" id="GO:0000917">
    <property type="term" value="P:division septum assembly"/>
    <property type="evidence" value="ECO:0007669"/>
    <property type="project" value="TreeGrafter"/>
</dbReference>
<dbReference type="GO" id="GO:0043093">
    <property type="term" value="P:FtsZ-dependent cytokinesis"/>
    <property type="evidence" value="ECO:0007669"/>
    <property type="project" value="UniProtKB-UniRule"/>
</dbReference>
<dbReference type="Gene3D" id="3.30.1400.10">
    <property type="entry name" value="ZipA, C-terminal FtsZ-binding domain"/>
    <property type="match status" value="1"/>
</dbReference>
<dbReference type="HAMAP" id="MF_00509">
    <property type="entry name" value="ZipA"/>
    <property type="match status" value="1"/>
</dbReference>
<dbReference type="InterPro" id="IPR011919">
    <property type="entry name" value="Cell_div_ZipA"/>
</dbReference>
<dbReference type="InterPro" id="IPR007449">
    <property type="entry name" value="ZipA_FtsZ-bd_C"/>
</dbReference>
<dbReference type="InterPro" id="IPR036765">
    <property type="entry name" value="ZipA_FtsZ-bd_C_sf"/>
</dbReference>
<dbReference type="NCBIfam" id="TIGR02205">
    <property type="entry name" value="septum_zipA"/>
    <property type="match status" value="1"/>
</dbReference>
<dbReference type="PANTHER" id="PTHR38685">
    <property type="entry name" value="CELL DIVISION PROTEIN ZIPA"/>
    <property type="match status" value="1"/>
</dbReference>
<dbReference type="PANTHER" id="PTHR38685:SF1">
    <property type="entry name" value="CELL DIVISION PROTEIN ZIPA"/>
    <property type="match status" value="1"/>
</dbReference>
<dbReference type="Pfam" id="PF04354">
    <property type="entry name" value="ZipA_C"/>
    <property type="match status" value="1"/>
</dbReference>
<dbReference type="SMART" id="SM00771">
    <property type="entry name" value="ZipA_C"/>
    <property type="match status" value="1"/>
</dbReference>
<dbReference type="SUPFAM" id="SSF64383">
    <property type="entry name" value="Cell-division protein ZipA, C-terminal domain"/>
    <property type="match status" value="1"/>
</dbReference>
<comment type="function">
    <text evidence="1">Essential cell division protein that stabilizes the FtsZ protofilaments by cross-linking them and that serves as a cytoplasmic membrane anchor for the Z ring. Also required for the recruitment to the septal ring of downstream cell division proteins.</text>
</comment>
<comment type="subunit">
    <text evidence="1">Interacts with FtsZ via their C-terminal domains.</text>
</comment>
<comment type="subcellular location">
    <subcellularLocation>
        <location evidence="1">Cell inner membrane</location>
        <topology evidence="1">Single-pass type I membrane protein</topology>
    </subcellularLocation>
    <text evidence="1">Localizes to the Z ring in an FtsZ-dependent manner.</text>
</comment>
<comment type="similarity">
    <text evidence="1">Belongs to the ZipA family.</text>
</comment>
<name>ZIPA_XYLFT</name>